<name>UNG_AZOVD</name>
<reference key="1">
    <citation type="journal article" date="2009" name="J. Bacteriol.">
        <title>Genome sequence of Azotobacter vinelandii, an obligate aerobe specialized to support diverse anaerobic metabolic processes.</title>
        <authorList>
            <person name="Setubal J.C."/>
            <person name="Dos Santos P."/>
            <person name="Goldman B.S."/>
            <person name="Ertesvaag H."/>
            <person name="Espin G."/>
            <person name="Rubio L.M."/>
            <person name="Valla S."/>
            <person name="Almeida N.F."/>
            <person name="Balasubramanian D."/>
            <person name="Cromes L."/>
            <person name="Curatti L."/>
            <person name="Du Z."/>
            <person name="Godsy E."/>
            <person name="Goodner B."/>
            <person name="Hellner-Burris K."/>
            <person name="Hernandez J.A."/>
            <person name="Houmiel K."/>
            <person name="Imperial J."/>
            <person name="Kennedy C."/>
            <person name="Larson T.J."/>
            <person name="Latreille P."/>
            <person name="Ligon L.S."/>
            <person name="Lu J."/>
            <person name="Maerk M."/>
            <person name="Miller N.M."/>
            <person name="Norton S."/>
            <person name="O'Carroll I.P."/>
            <person name="Paulsen I."/>
            <person name="Raulfs E.C."/>
            <person name="Roemer R."/>
            <person name="Rosser J."/>
            <person name="Segura D."/>
            <person name="Slater S."/>
            <person name="Stricklin S.L."/>
            <person name="Studholme D.J."/>
            <person name="Sun J."/>
            <person name="Viana C.J."/>
            <person name="Wallin E."/>
            <person name="Wang B."/>
            <person name="Wheeler C."/>
            <person name="Zhu H."/>
            <person name="Dean D.R."/>
            <person name="Dixon R."/>
            <person name="Wood D."/>
        </authorList>
    </citation>
    <scope>NUCLEOTIDE SEQUENCE [LARGE SCALE GENOMIC DNA]</scope>
    <source>
        <strain>DJ / ATCC BAA-1303</strain>
    </source>
</reference>
<keyword id="KW-0963">Cytoplasm</keyword>
<keyword id="KW-0227">DNA damage</keyword>
<keyword id="KW-0234">DNA repair</keyword>
<keyword id="KW-0378">Hydrolase</keyword>
<sequence>MGRVEDRVRLEASWKEALHDEFEKPYMQELSDFLRREKAAGKEIYPPGSLIFNALDSTPLDQVKVVIIGQDPYHGPGQAHGLCFSVQPGVPVPPSLQNIFKELKRDLNIDIPKHGHLQRWAEQGVLLLNTSLTVERGNAGSHAGMGWQRFTDRVIEVVSQRREHVVFMLWGSHAQSKRRLIDSSKHLVLCSAHPSPLSAHRGFIGNGHFSRANQFLEQHGLTPIDWHLPEEP</sequence>
<gene>
    <name evidence="1" type="primary">ung</name>
    <name type="ordered locus">Avin_13610</name>
</gene>
<proteinExistence type="inferred from homology"/>
<feature type="chain" id="PRO_1000203372" description="Uracil-DNA glycosylase">
    <location>
        <begin position="1"/>
        <end position="232"/>
    </location>
</feature>
<feature type="active site" description="Proton acceptor" evidence="1">
    <location>
        <position position="71"/>
    </location>
</feature>
<dbReference type="EC" id="3.2.2.27" evidence="1"/>
<dbReference type="EMBL" id="CP001157">
    <property type="protein sequence ID" value="ACO77583.1"/>
    <property type="molecule type" value="Genomic_DNA"/>
</dbReference>
<dbReference type="RefSeq" id="WP_012700002.1">
    <property type="nucleotide sequence ID" value="NC_012560.1"/>
</dbReference>
<dbReference type="SMR" id="C1DQR0"/>
<dbReference type="STRING" id="322710.Avin_13610"/>
<dbReference type="EnsemblBacteria" id="ACO77583">
    <property type="protein sequence ID" value="ACO77583"/>
    <property type="gene ID" value="Avin_13610"/>
</dbReference>
<dbReference type="GeneID" id="88184668"/>
<dbReference type="KEGG" id="avn:Avin_13610"/>
<dbReference type="eggNOG" id="COG0692">
    <property type="taxonomic scope" value="Bacteria"/>
</dbReference>
<dbReference type="HOGENOM" id="CLU_032162_3_1_6"/>
<dbReference type="OrthoDB" id="9804372at2"/>
<dbReference type="Proteomes" id="UP000002424">
    <property type="component" value="Chromosome"/>
</dbReference>
<dbReference type="GO" id="GO:0005737">
    <property type="term" value="C:cytoplasm"/>
    <property type="evidence" value="ECO:0007669"/>
    <property type="project" value="UniProtKB-SubCell"/>
</dbReference>
<dbReference type="GO" id="GO:0004844">
    <property type="term" value="F:uracil DNA N-glycosylase activity"/>
    <property type="evidence" value="ECO:0007669"/>
    <property type="project" value="UniProtKB-UniRule"/>
</dbReference>
<dbReference type="GO" id="GO:0097510">
    <property type="term" value="P:base-excision repair, AP site formation via deaminated base removal"/>
    <property type="evidence" value="ECO:0007669"/>
    <property type="project" value="TreeGrafter"/>
</dbReference>
<dbReference type="CDD" id="cd10027">
    <property type="entry name" value="UDG-F1-like"/>
    <property type="match status" value="1"/>
</dbReference>
<dbReference type="FunFam" id="3.40.470.10:FF:000001">
    <property type="entry name" value="Uracil-DNA glycosylase"/>
    <property type="match status" value="1"/>
</dbReference>
<dbReference type="Gene3D" id="3.40.470.10">
    <property type="entry name" value="Uracil-DNA glycosylase-like domain"/>
    <property type="match status" value="1"/>
</dbReference>
<dbReference type="HAMAP" id="MF_00148">
    <property type="entry name" value="UDG"/>
    <property type="match status" value="1"/>
</dbReference>
<dbReference type="InterPro" id="IPR002043">
    <property type="entry name" value="UDG_fam1"/>
</dbReference>
<dbReference type="InterPro" id="IPR018085">
    <property type="entry name" value="Ura-DNA_Glyclase_AS"/>
</dbReference>
<dbReference type="InterPro" id="IPR005122">
    <property type="entry name" value="Uracil-DNA_glycosylase-like"/>
</dbReference>
<dbReference type="InterPro" id="IPR036895">
    <property type="entry name" value="Uracil-DNA_glycosylase-like_sf"/>
</dbReference>
<dbReference type="NCBIfam" id="NF003588">
    <property type="entry name" value="PRK05254.1-1"/>
    <property type="match status" value="1"/>
</dbReference>
<dbReference type="NCBIfam" id="NF003589">
    <property type="entry name" value="PRK05254.1-2"/>
    <property type="match status" value="1"/>
</dbReference>
<dbReference type="NCBIfam" id="NF003591">
    <property type="entry name" value="PRK05254.1-4"/>
    <property type="match status" value="1"/>
</dbReference>
<dbReference type="NCBIfam" id="NF003592">
    <property type="entry name" value="PRK05254.1-5"/>
    <property type="match status" value="1"/>
</dbReference>
<dbReference type="NCBIfam" id="TIGR00628">
    <property type="entry name" value="ung"/>
    <property type="match status" value="1"/>
</dbReference>
<dbReference type="PANTHER" id="PTHR11264">
    <property type="entry name" value="URACIL-DNA GLYCOSYLASE"/>
    <property type="match status" value="1"/>
</dbReference>
<dbReference type="PANTHER" id="PTHR11264:SF0">
    <property type="entry name" value="URACIL-DNA GLYCOSYLASE"/>
    <property type="match status" value="1"/>
</dbReference>
<dbReference type="Pfam" id="PF03167">
    <property type="entry name" value="UDG"/>
    <property type="match status" value="1"/>
</dbReference>
<dbReference type="SMART" id="SM00986">
    <property type="entry name" value="UDG"/>
    <property type="match status" value="1"/>
</dbReference>
<dbReference type="SMART" id="SM00987">
    <property type="entry name" value="UreE_C"/>
    <property type="match status" value="1"/>
</dbReference>
<dbReference type="SUPFAM" id="SSF52141">
    <property type="entry name" value="Uracil-DNA glycosylase-like"/>
    <property type="match status" value="1"/>
</dbReference>
<dbReference type="PROSITE" id="PS00130">
    <property type="entry name" value="U_DNA_GLYCOSYLASE"/>
    <property type="match status" value="1"/>
</dbReference>
<organism>
    <name type="scientific">Azotobacter vinelandii (strain DJ / ATCC BAA-1303)</name>
    <dbReference type="NCBI Taxonomy" id="322710"/>
    <lineage>
        <taxon>Bacteria</taxon>
        <taxon>Pseudomonadati</taxon>
        <taxon>Pseudomonadota</taxon>
        <taxon>Gammaproteobacteria</taxon>
        <taxon>Pseudomonadales</taxon>
        <taxon>Pseudomonadaceae</taxon>
        <taxon>Azotobacter</taxon>
    </lineage>
</organism>
<evidence type="ECO:0000255" key="1">
    <source>
        <dbReference type="HAMAP-Rule" id="MF_00148"/>
    </source>
</evidence>
<accession>C1DQR0</accession>
<comment type="function">
    <text evidence="1">Excises uracil residues from the DNA which can arise as a result of misincorporation of dUMP residues by DNA polymerase or due to deamination of cytosine.</text>
</comment>
<comment type="catalytic activity">
    <reaction evidence="1">
        <text>Hydrolyzes single-stranded DNA or mismatched double-stranded DNA and polynucleotides, releasing free uracil.</text>
        <dbReference type="EC" id="3.2.2.27"/>
    </reaction>
</comment>
<comment type="subcellular location">
    <subcellularLocation>
        <location evidence="1">Cytoplasm</location>
    </subcellularLocation>
</comment>
<comment type="similarity">
    <text evidence="1">Belongs to the uracil-DNA glycosylase (UDG) superfamily. UNG family.</text>
</comment>
<protein>
    <recommendedName>
        <fullName evidence="1">Uracil-DNA glycosylase</fullName>
        <shortName evidence="1">UDG</shortName>
        <ecNumber evidence="1">3.2.2.27</ecNumber>
    </recommendedName>
</protein>